<organismHost>
    <name type="scientific">Bacillus subtilis</name>
    <dbReference type="NCBI Taxonomy" id="1423"/>
</organismHost>
<sequence>MTNLSDIIEKETGKQLVIQESILMLPEEVEEVIGNKPESDILVHTAYDESTDENVMLLTSDAPEYKPWALVIQDSNGENKIKML</sequence>
<organism>
    <name type="scientific">Bacillus phage PBS2</name>
    <name type="common">Bacteriophage PBS2</name>
    <dbReference type="NCBI Taxonomy" id="10684"/>
    <lineage>
        <taxon>Viruses</taxon>
        <taxon>Duplodnaviria</taxon>
        <taxon>Heunggongvirae</taxon>
        <taxon>Uroviricota</taxon>
        <taxon>Caudoviricetes</taxon>
    </lineage>
</organism>
<comment type="function">
    <text>This protein binds specifically and reversibly to the host uracil-DNA glycosylase, preventing removal of uracil residues from PBS2 DNA by the host uracil-excision repair system.</text>
</comment>
<comment type="interaction">
    <interactant intactId="EBI-1025973">
        <id>P14739</id>
    </interactant>
    <interactant intactId="EBI-559403">
        <id>P12295</id>
        <label>ung</label>
    </interactant>
    <organismsDiffer>true</organismsDiffer>
    <experiments>4</experiments>
</comment>
<gene>
    <name type="primary">UGI</name>
</gene>
<protein>
    <recommendedName>
        <fullName>Uracil-DNA glycosylase inhibitor</fullName>
    </recommendedName>
</protein>
<dbReference type="EMBL" id="J04434">
    <property type="protein sequence ID" value="AAA91582.1"/>
    <property type="molecule type" value="Genomic_DNA"/>
</dbReference>
<dbReference type="PIR" id="A32206">
    <property type="entry name" value="QIBPS2"/>
</dbReference>
<dbReference type="PDB" id="1EUI">
    <property type="method" value="X-ray"/>
    <property type="resolution" value="3.20 A"/>
    <property type="chains" value="C/D=1-84"/>
</dbReference>
<dbReference type="PDB" id="1LQG">
    <property type="method" value="X-ray"/>
    <property type="resolution" value="2.90 A"/>
    <property type="chains" value="C/D=1-84"/>
</dbReference>
<dbReference type="PDB" id="1LQM">
    <property type="method" value="X-ray"/>
    <property type="resolution" value="3.20 A"/>
    <property type="chains" value="B/D/F/H=1-84"/>
</dbReference>
<dbReference type="PDB" id="1UDI">
    <property type="method" value="X-ray"/>
    <property type="resolution" value="2.70 A"/>
    <property type="chains" value="I=2-84"/>
</dbReference>
<dbReference type="PDB" id="1UGH">
    <property type="method" value="X-ray"/>
    <property type="resolution" value="1.90 A"/>
    <property type="chains" value="I=3-84"/>
</dbReference>
<dbReference type="PDB" id="1UGI">
    <property type="method" value="X-ray"/>
    <property type="resolution" value="1.55 A"/>
    <property type="chains" value="A/B/C/D/E/F/G/H=1-84"/>
</dbReference>
<dbReference type="PDB" id="1UUG">
    <property type="method" value="X-ray"/>
    <property type="resolution" value="2.40 A"/>
    <property type="chains" value="B/D=1-84"/>
</dbReference>
<dbReference type="PDB" id="2J8X">
    <property type="method" value="X-ray"/>
    <property type="resolution" value="2.30 A"/>
    <property type="chains" value="B/D=1-84"/>
</dbReference>
<dbReference type="PDB" id="2UGI">
    <property type="method" value="X-ray"/>
    <property type="resolution" value="2.20 A"/>
    <property type="chains" value="A/B=1-84"/>
</dbReference>
<dbReference type="PDB" id="2UUG">
    <property type="method" value="X-ray"/>
    <property type="resolution" value="2.60 A"/>
    <property type="chains" value="C/D=1-84"/>
</dbReference>
<dbReference type="PDB" id="2ZHX">
    <property type="method" value="X-ray"/>
    <property type="resolution" value="3.10 A"/>
    <property type="chains" value="B/D/F/H/J/L/N=1-84"/>
</dbReference>
<dbReference type="PDB" id="4LYL">
    <property type="method" value="X-ray"/>
    <property type="resolution" value="1.93 A"/>
    <property type="chains" value="B/D/F/H/J/L/N/P=1-84"/>
</dbReference>
<dbReference type="PDB" id="6LYD">
    <property type="method" value="X-ray"/>
    <property type="resolution" value="2.60 A"/>
    <property type="chains" value="I=2-84"/>
</dbReference>
<dbReference type="PDB" id="6LYE">
    <property type="method" value="X-ray"/>
    <property type="resolution" value="3.10 A"/>
    <property type="chains" value="I=2-84"/>
</dbReference>
<dbReference type="PDBsum" id="1EUI"/>
<dbReference type="PDBsum" id="1LQG"/>
<dbReference type="PDBsum" id="1LQM"/>
<dbReference type="PDBsum" id="1UDI"/>
<dbReference type="PDBsum" id="1UGH"/>
<dbReference type="PDBsum" id="1UGI"/>
<dbReference type="PDBsum" id="1UUG"/>
<dbReference type="PDBsum" id="2J8X"/>
<dbReference type="PDBsum" id="2UGI"/>
<dbReference type="PDBsum" id="2UUG"/>
<dbReference type="PDBsum" id="2ZHX"/>
<dbReference type="PDBsum" id="4LYL"/>
<dbReference type="PDBsum" id="6LYD"/>
<dbReference type="PDBsum" id="6LYE"/>
<dbReference type="BMRB" id="P14739"/>
<dbReference type="SMR" id="P14739"/>
<dbReference type="IntAct" id="P14739">
    <property type="interactions" value="2"/>
</dbReference>
<dbReference type="MINT" id="P14739"/>
<dbReference type="DrugBank" id="DB03366">
    <property type="generic name" value="Imidazole"/>
</dbReference>
<dbReference type="SABIO-RK" id="P14739"/>
<dbReference type="EvolutionaryTrace" id="P14739"/>
<dbReference type="Gene3D" id="3.10.450.20">
    <property type="entry name" value="Bacteriophage PBS2, uracil-glycosylase inhibitor"/>
    <property type="match status" value="1"/>
</dbReference>
<dbReference type="InterPro" id="IPR024062">
    <property type="entry name" value="Phage_PBS2_Ugi"/>
</dbReference>
<dbReference type="InterPro" id="IPR043805">
    <property type="entry name" value="Ugi"/>
</dbReference>
<dbReference type="Pfam" id="PF18880">
    <property type="entry name" value="UDI"/>
    <property type="match status" value="1"/>
</dbReference>
<dbReference type="SUPFAM" id="SSF54441">
    <property type="entry name" value="Uracil-DNA glycosylase inhibitor protein"/>
    <property type="match status" value="1"/>
</dbReference>
<keyword id="KW-0002">3D-structure</keyword>
<keyword id="KW-0903">Direct protein sequencing</keyword>
<proteinExistence type="evidence at protein level"/>
<reference key="1">
    <citation type="journal article" date="1989" name="J. Biol. Chem.">
        <title>Uracil-DNA glycosylase inhibitor gene of bacteriophage PBS2 encodes a binding protein specific for uracil-DNA glycosylase.</title>
        <authorList>
            <person name="Wang Z."/>
            <person name="Mosbaugh D.W."/>
        </authorList>
    </citation>
    <scope>NUCLEOTIDE SEQUENCE [GENOMIC DNA]</scope>
    <scope>PROTEIN SEQUENCE OF 1-5</scope>
</reference>
<reference key="2">
    <citation type="journal article" date="1997" name="J. Biol. Chem.">
        <title>Site-directed mutagenesis and characterization of uracil-DNA glycosylase inhibitor protein. Role of specific carboxylic amino acids in complex formation with Escherichia coli uracil-DNA glycosylase.</title>
        <authorList>
            <person name="Lundquist A.J."/>
            <person name="Beger R.D."/>
            <person name="Bennett S.E."/>
            <person name="Bolton P.H."/>
            <person name="Mosbaugh D.W."/>
        </authorList>
    </citation>
    <scope>STRUCTURE BY NMR</scope>
</reference>
<reference key="3">
    <citation type="journal article" date="1998" name="Nucleic Acids Res.">
        <title>X-ray analysis of a complex of Escherichia coli uracil DNA glycosylase (EcUDG) with a proteinaceous inhibitor. The structure elucidation of a prokaryotic UDG.</title>
        <authorList>
            <person name="Ravishankar R."/>
            <person name="Sagar M.B."/>
            <person name="Roy S."/>
            <person name="Purnapatre K."/>
            <person name="Handa P."/>
            <person name="Varshney U."/>
            <person name="Vijayan M."/>
        </authorList>
    </citation>
    <scope>X-RAY CRYSTALLOGRAPHY (3.2 ANGSTROMS)</scope>
</reference>
<reference key="4">
    <citation type="journal article" date="1999" name="J. Mol. Biol.">
        <title>Protein mimicry of DNA from crystal structures of the uracil-DNA glycosylase inhibitor protein and its complex with Escherichia coli uracil-DNA glycosylase.</title>
        <authorList>
            <person name="Putnam C.D."/>
            <person name="Shroyer M.J.N."/>
            <person name="Lundquist A.J."/>
            <person name="Mol C.D."/>
            <person name="Arvai A.S."/>
            <person name="Mosbaugh D.W."/>
            <person name="Tainer J.A."/>
        </authorList>
    </citation>
    <scope>X-RAY CRYSTALLOGRAPHY (1.55 ANGSTROMS)</scope>
</reference>
<name>UNGI_BPPB2</name>
<evidence type="ECO:0007829" key="1">
    <source>
        <dbReference type="PDB" id="1UGI"/>
    </source>
</evidence>
<evidence type="ECO:0007829" key="2">
    <source>
        <dbReference type="PDB" id="6LYE"/>
    </source>
</evidence>
<feature type="chain" id="PRO_0000065722" description="Uracil-DNA glycosylase inhibitor">
    <location>
        <begin position="1"/>
        <end position="84"/>
    </location>
</feature>
<feature type="helix" evidence="1">
    <location>
        <begin position="3"/>
        <end position="12"/>
    </location>
</feature>
<feature type="strand" evidence="1">
    <location>
        <begin position="22"/>
        <end position="24"/>
    </location>
</feature>
<feature type="helix" evidence="1">
    <location>
        <begin position="26"/>
        <end position="33"/>
    </location>
</feature>
<feature type="strand" evidence="1">
    <location>
        <begin position="41"/>
        <end position="48"/>
    </location>
</feature>
<feature type="turn" evidence="1">
    <location>
        <begin position="49"/>
        <end position="52"/>
    </location>
</feature>
<feature type="strand" evidence="1">
    <location>
        <begin position="53"/>
        <end position="60"/>
    </location>
</feature>
<feature type="turn" evidence="1">
    <location>
        <begin position="62"/>
        <end position="64"/>
    </location>
</feature>
<feature type="strand" evidence="1">
    <location>
        <begin position="67"/>
        <end position="73"/>
    </location>
</feature>
<feature type="strand" evidence="2">
    <location>
        <begin position="75"/>
        <end position="77"/>
    </location>
</feature>
<feature type="strand" evidence="1">
    <location>
        <begin position="79"/>
        <end position="83"/>
    </location>
</feature>
<accession>P14739</accession>